<dbReference type="EC" id="3.6.5.-"/>
<dbReference type="EMBL" id="AE016819">
    <property type="protein sequence ID" value="AAS53260.1"/>
    <property type="molecule type" value="Genomic_DNA"/>
</dbReference>
<dbReference type="RefSeq" id="NP_985436.1">
    <property type="nucleotide sequence ID" value="NM_210790.1"/>
</dbReference>
<dbReference type="SMR" id="Q755D7"/>
<dbReference type="FunCoup" id="Q755D7">
    <property type="interactions" value="975"/>
</dbReference>
<dbReference type="STRING" id="284811.Q755D7"/>
<dbReference type="EnsemblFungi" id="AAS53260">
    <property type="protein sequence ID" value="AAS53260"/>
    <property type="gene ID" value="AGOS_AFL114W"/>
</dbReference>
<dbReference type="GeneID" id="4621663"/>
<dbReference type="KEGG" id="ago:AGOS_AFL114W"/>
<dbReference type="eggNOG" id="KOG0077">
    <property type="taxonomic scope" value="Eukaryota"/>
</dbReference>
<dbReference type="HOGENOM" id="CLU_040729_6_0_1"/>
<dbReference type="InParanoid" id="Q755D7"/>
<dbReference type="OMA" id="GLWNKHG"/>
<dbReference type="OrthoDB" id="2011769at2759"/>
<dbReference type="Proteomes" id="UP000000591">
    <property type="component" value="Chromosome VI"/>
</dbReference>
<dbReference type="GO" id="GO:0030127">
    <property type="term" value="C:COPII vesicle coat"/>
    <property type="evidence" value="ECO:0000318"/>
    <property type="project" value="GO_Central"/>
</dbReference>
<dbReference type="GO" id="GO:0070971">
    <property type="term" value="C:endoplasmic reticulum exit site"/>
    <property type="evidence" value="ECO:0000318"/>
    <property type="project" value="GO_Central"/>
</dbReference>
<dbReference type="GO" id="GO:0005789">
    <property type="term" value="C:endoplasmic reticulum membrane"/>
    <property type="evidence" value="ECO:0007669"/>
    <property type="project" value="UniProtKB-SubCell"/>
</dbReference>
<dbReference type="GO" id="GO:0000139">
    <property type="term" value="C:Golgi membrane"/>
    <property type="evidence" value="ECO:0007669"/>
    <property type="project" value="UniProtKB-SubCell"/>
</dbReference>
<dbReference type="GO" id="GO:0044233">
    <property type="term" value="C:mitochondria-associated endoplasmic reticulum membrane contact site"/>
    <property type="evidence" value="ECO:0007669"/>
    <property type="project" value="EnsemblFungi"/>
</dbReference>
<dbReference type="GO" id="GO:0005739">
    <property type="term" value="C:mitochondrion"/>
    <property type="evidence" value="ECO:0007669"/>
    <property type="project" value="GOC"/>
</dbReference>
<dbReference type="GO" id="GO:0005525">
    <property type="term" value="F:GTP binding"/>
    <property type="evidence" value="ECO:0007669"/>
    <property type="project" value="UniProtKB-KW"/>
</dbReference>
<dbReference type="GO" id="GO:0003924">
    <property type="term" value="F:GTPase activity"/>
    <property type="evidence" value="ECO:0000318"/>
    <property type="project" value="GO_Central"/>
</dbReference>
<dbReference type="GO" id="GO:0090158">
    <property type="term" value="P:endoplasmic reticulum membrane organization"/>
    <property type="evidence" value="ECO:0007669"/>
    <property type="project" value="EnsemblFungi"/>
</dbReference>
<dbReference type="GO" id="GO:0006888">
    <property type="term" value="P:endoplasmic reticulum to Golgi vesicle-mediated transport"/>
    <property type="evidence" value="ECO:0000318"/>
    <property type="project" value="GO_Central"/>
</dbReference>
<dbReference type="GO" id="GO:0006886">
    <property type="term" value="P:intracellular protein transport"/>
    <property type="evidence" value="ECO:0007669"/>
    <property type="project" value="InterPro"/>
</dbReference>
<dbReference type="GO" id="GO:0061024">
    <property type="term" value="P:membrane organization"/>
    <property type="evidence" value="ECO:0000318"/>
    <property type="project" value="GO_Central"/>
</dbReference>
<dbReference type="GO" id="GO:0000266">
    <property type="term" value="P:mitochondrial fission"/>
    <property type="evidence" value="ECO:0007669"/>
    <property type="project" value="EnsemblFungi"/>
</dbReference>
<dbReference type="GO" id="GO:0007006">
    <property type="term" value="P:mitochondrial membrane organization"/>
    <property type="evidence" value="ECO:0007669"/>
    <property type="project" value="EnsemblFungi"/>
</dbReference>
<dbReference type="GO" id="GO:0006998">
    <property type="term" value="P:nuclear envelope organization"/>
    <property type="evidence" value="ECO:0007669"/>
    <property type="project" value="EnsemblFungi"/>
</dbReference>
<dbReference type="GO" id="GO:1902953">
    <property type="term" value="P:positive regulation of ER to Golgi vesicle-mediated transport"/>
    <property type="evidence" value="ECO:0007669"/>
    <property type="project" value="EnsemblFungi"/>
</dbReference>
<dbReference type="GO" id="GO:0070863">
    <property type="term" value="P:positive regulation of protein exit from endoplasmic reticulum"/>
    <property type="evidence" value="ECO:0007669"/>
    <property type="project" value="EnsemblFungi"/>
</dbReference>
<dbReference type="GO" id="GO:0003400">
    <property type="term" value="P:regulation of COPII vesicle coating"/>
    <property type="evidence" value="ECO:0000318"/>
    <property type="project" value="GO_Central"/>
</dbReference>
<dbReference type="GO" id="GO:0016050">
    <property type="term" value="P:vesicle organization"/>
    <property type="evidence" value="ECO:0000318"/>
    <property type="project" value="GO_Central"/>
</dbReference>
<dbReference type="CDD" id="cd00879">
    <property type="entry name" value="Sar1"/>
    <property type="match status" value="1"/>
</dbReference>
<dbReference type="FunFam" id="3.40.50.300:FF:000161">
    <property type="entry name" value="Small COPII coat GTPase"/>
    <property type="match status" value="1"/>
</dbReference>
<dbReference type="Gene3D" id="3.40.50.300">
    <property type="entry name" value="P-loop containing nucleotide triphosphate hydrolases"/>
    <property type="match status" value="1"/>
</dbReference>
<dbReference type="InterPro" id="IPR027417">
    <property type="entry name" value="P-loop_NTPase"/>
</dbReference>
<dbReference type="InterPro" id="IPR005225">
    <property type="entry name" value="Small_GTP-bd"/>
</dbReference>
<dbReference type="InterPro" id="IPR006689">
    <property type="entry name" value="Small_GTPase_ARF/SAR"/>
</dbReference>
<dbReference type="InterPro" id="IPR006687">
    <property type="entry name" value="Small_GTPase_SAR1"/>
</dbReference>
<dbReference type="NCBIfam" id="TIGR00231">
    <property type="entry name" value="small_GTP"/>
    <property type="match status" value="1"/>
</dbReference>
<dbReference type="PANTHER" id="PTHR45684">
    <property type="entry name" value="RE74312P"/>
    <property type="match status" value="1"/>
</dbReference>
<dbReference type="Pfam" id="PF00025">
    <property type="entry name" value="Arf"/>
    <property type="match status" value="1"/>
</dbReference>
<dbReference type="PRINTS" id="PR00328">
    <property type="entry name" value="SAR1GTPBP"/>
</dbReference>
<dbReference type="SMART" id="SM00177">
    <property type="entry name" value="ARF"/>
    <property type="match status" value="1"/>
</dbReference>
<dbReference type="SMART" id="SM00178">
    <property type="entry name" value="SAR"/>
    <property type="match status" value="1"/>
</dbReference>
<dbReference type="SUPFAM" id="SSF52540">
    <property type="entry name" value="P-loop containing nucleoside triphosphate hydrolases"/>
    <property type="match status" value="1"/>
</dbReference>
<dbReference type="PROSITE" id="PS51422">
    <property type="entry name" value="SAR1"/>
    <property type="match status" value="1"/>
</dbReference>
<feature type="chain" id="PRO_0000295505" description="Small COPII coat GTPase SAR1">
    <location>
        <begin position="1"/>
        <end position="190"/>
    </location>
</feature>
<feature type="binding site" evidence="1">
    <location>
        <begin position="30"/>
        <end position="37"/>
    </location>
    <ligand>
        <name>GTP</name>
        <dbReference type="ChEBI" id="CHEBI:37565"/>
    </ligand>
</feature>
<feature type="binding site" evidence="1">
    <location>
        <begin position="73"/>
        <end position="76"/>
    </location>
    <ligand>
        <name>GTP</name>
        <dbReference type="ChEBI" id="CHEBI:37565"/>
    </ligand>
</feature>
<feature type="binding site" evidence="1">
    <location>
        <begin position="132"/>
        <end position="135"/>
    </location>
    <ligand>
        <name>GTP</name>
        <dbReference type="ChEBI" id="CHEBI:37565"/>
    </ligand>
</feature>
<organism>
    <name type="scientific">Eremothecium gossypii (strain ATCC 10895 / CBS 109.51 / FGSC 9923 / NRRL Y-1056)</name>
    <name type="common">Yeast</name>
    <name type="synonym">Ashbya gossypii</name>
    <dbReference type="NCBI Taxonomy" id="284811"/>
    <lineage>
        <taxon>Eukaryota</taxon>
        <taxon>Fungi</taxon>
        <taxon>Dikarya</taxon>
        <taxon>Ascomycota</taxon>
        <taxon>Saccharomycotina</taxon>
        <taxon>Saccharomycetes</taxon>
        <taxon>Saccharomycetales</taxon>
        <taxon>Saccharomycetaceae</taxon>
        <taxon>Eremothecium</taxon>
    </lineage>
</organism>
<name>SAR1_EREGS</name>
<protein>
    <recommendedName>
        <fullName>Small COPII coat GTPase SAR1</fullName>
        <ecNumber>3.6.5.-</ecNumber>
    </recommendedName>
</protein>
<reference key="1">
    <citation type="journal article" date="2004" name="Science">
        <title>The Ashbya gossypii genome as a tool for mapping the ancient Saccharomyces cerevisiae genome.</title>
        <authorList>
            <person name="Dietrich F.S."/>
            <person name="Voegeli S."/>
            <person name="Brachat S."/>
            <person name="Lerch A."/>
            <person name="Gates K."/>
            <person name="Steiner S."/>
            <person name="Mohr C."/>
            <person name="Poehlmann R."/>
            <person name="Luedi P."/>
            <person name="Choi S."/>
            <person name="Wing R.A."/>
            <person name="Flavier A."/>
            <person name="Gaffney T.D."/>
            <person name="Philippsen P."/>
        </authorList>
    </citation>
    <scope>NUCLEOTIDE SEQUENCE [LARGE SCALE GENOMIC DNA]</scope>
    <source>
        <strain>ATCC 10895 / CBS 109.51 / FGSC 9923 / NRRL Y-1056</strain>
    </source>
</reference>
<reference key="2">
    <citation type="journal article" date="2013" name="G3 (Bethesda)">
        <title>Genomes of Ashbya fungi isolated from insects reveal four mating-type loci, numerous translocations, lack of transposons, and distinct gene duplications.</title>
        <authorList>
            <person name="Dietrich F.S."/>
            <person name="Voegeli S."/>
            <person name="Kuo S."/>
            <person name="Philippsen P."/>
        </authorList>
    </citation>
    <scope>GENOME REANNOTATION</scope>
    <source>
        <strain>ATCC 10895 / CBS 109.51 / FGSC 9923 / NRRL Y-1056</strain>
    </source>
</reference>
<keyword id="KW-0968">Cytoplasmic vesicle</keyword>
<keyword id="KW-0256">Endoplasmic reticulum</keyword>
<keyword id="KW-0931">ER-Golgi transport</keyword>
<keyword id="KW-0333">Golgi apparatus</keyword>
<keyword id="KW-0342">GTP-binding</keyword>
<keyword id="KW-0378">Hydrolase</keyword>
<keyword id="KW-0472">Membrane</keyword>
<keyword id="KW-0547">Nucleotide-binding</keyword>
<keyword id="KW-0653">Protein transport</keyword>
<keyword id="KW-1185">Reference proteome</keyword>
<keyword id="KW-0813">Transport</keyword>
<accession>Q755D7</accession>
<sequence length="190" mass="21428">MAVWDLFGWFRDILSSLGLWNKHGKLLFLGLDNAGKTTLLHMLKNDRLATLQPTWHPTSEELAIGSIKFTTFDLGGHIQARRLWKDYFPEVNGIVFLVDAADSERFNEARVELDALFQIPELKTVPFVILGNKIDAPSAVSETELRAALGLLNTTGDARIEGQRPVELFMCSVVMKSGYLEAFQWLSQYI</sequence>
<gene>
    <name type="primary">SAR1</name>
    <name type="ordered locus">AFL114W</name>
</gene>
<evidence type="ECO:0000250" key="1"/>
<evidence type="ECO:0000305" key="2"/>
<comment type="function">
    <text evidence="1">Small GTPase component of the coat protein complex II (COPII) which promotes the formation of transport vesicles from the endoplasmic reticulum (ER). The coat has two main functions, the physical deformation of the endoplasmic reticulum membrane into vesicles and the selection of cargo molecules. SAR1 controls the coat assembly in a stepwise manner. Activated SAR1-GTP binds to membranes first and recruits the SEC23/24 complex. These SEC23/24-SAR1 prebudding intermediates are then collected by the SEC13/31 complex as subunits polymerize to form coated transport vesicles. Conversion to SAR1-GDP triggers coat release and recycles COPII subunits (By similarity).</text>
</comment>
<comment type="catalytic activity">
    <reaction>
        <text>GTP + H2O = GDP + phosphate + H(+)</text>
        <dbReference type="Rhea" id="RHEA:19669"/>
        <dbReference type="ChEBI" id="CHEBI:15377"/>
        <dbReference type="ChEBI" id="CHEBI:15378"/>
        <dbReference type="ChEBI" id="CHEBI:37565"/>
        <dbReference type="ChEBI" id="CHEBI:43474"/>
        <dbReference type="ChEBI" id="CHEBI:58189"/>
    </reaction>
</comment>
<comment type="subunit">
    <text evidence="1">COPII is composed of at least 5 proteins: the SEC23/24 complex, the SEC13/31 complex and SAR1.</text>
</comment>
<comment type="subcellular location">
    <subcellularLocation>
        <location evidence="1">Cytoplasmic vesicle</location>
        <location evidence="1">COPII-coated vesicle membrane</location>
        <topology evidence="1">Peripheral membrane protein</topology>
        <orientation evidence="1">Cytoplasmic side</orientation>
    </subcellularLocation>
    <subcellularLocation>
        <location evidence="1">Endoplasmic reticulum membrane</location>
        <topology evidence="1">Peripheral membrane protein</topology>
        <orientation evidence="1">Cytoplasmic side</orientation>
    </subcellularLocation>
    <subcellularLocation>
        <location evidence="1">Golgi apparatus membrane</location>
        <topology evidence="1">Peripheral membrane protein</topology>
        <orientation evidence="1">Cytoplasmic side</orientation>
    </subcellularLocation>
</comment>
<comment type="similarity">
    <text evidence="2">Belongs to the small GTPase superfamily. SAR1 family.</text>
</comment>
<proteinExistence type="inferred from homology"/>